<reference key="1">
    <citation type="journal article" date="1996" name="Science">
        <title>Complete genome sequence of the methanogenic archaeon, Methanococcus jannaschii.</title>
        <authorList>
            <person name="Bult C.J."/>
            <person name="White O."/>
            <person name="Olsen G.J."/>
            <person name="Zhou L."/>
            <person name="Fleischmann R.D."/>
            <person name="Sutton G.G."/>
            <person name="Blake J.A."/>
            <person name="FitzGerald L.M."/>
            <person name="Clayton R.A."/>
            <person name="Gocayne J.D."/>
            <person name="Kerlavage A.R."/>
            <person name="Dougherty B.A."/>
            <person name="Tomb J.-F."/>
            <person name="Adams M.D."/>
            <person name="Reich C.I."/>
            <person name="Overbeek R."/>
            <person name="Kirkness E.F."/>
            <person name="Weinstock K.G."/>
            <person name="Merrick J.M."/>
            <person name="Glodek A."/>
            <person name="Scott J.L."/>
            <person name="Geoghagen N.S.M."/>
            <person name="Weidman J.F."/>
            <person name="Fuhrmann J.L."/>
            <person name="Nguyen D."/>
            <person name="Utterback T.R."/>
            <person name="Kelley J.M."/>
            <person name="Peterson J.D."/>
            <person name="Sadow P.W."/>
            <person name="Hanna M.C."/>
            <person name="Cotton M.D."/>
            <person name="Roberts K.M."/>
            <person name="Hurst M.A."/>
            <person name="Kaine B.P."/>
            <person name="Borodovsky M."/>
            <person name="Klenk H.-P."/>
            <person name="Fraser C.M."/>
            <person name="Smith H.O."/>
            <person name="Woese C.R."/>
            <person name="Venter J.C."/>
        </authorList>
    </citation>
    <scope>NUCLEOTIDE SEQUENCE [LARGE SCALE GENOMIC DNA]</scope>
    <source>
        <strain>ATCC 43067 / DSM 2661 / JAL-1 / JCM 10045 / NBRC 100440</strain>
    </source>
</reference>
<organism>
    <name type="scientific">Methanocaldococcus jannaschii (strain ATCC 43067 / DSM 2661 / JAL-1 / JCM 10045 / NBRC 100440)</name>
    <name type="common">Methanococcus jannaschii</name>
    <dbReference type="NCBI Taxonomy" id="243232"/>
    <lineage>
        <taxon>Archaea</taxon>
        <taxon>Methanobacteriati</taxon>
        <taxon>Methanobacteriota</taxon>
        <taxon>Methanomada group</taxon>
        <taxon>Methanococci</taxon>
        <taxon>Methanococcales</taxon>
        <taxon>Methanocaldococcaceae</taxon>
        <taxon>Methanocaldococcus</taxon>
    </lineage>
</organism>
<proteinExistence type="predicted"/>
<feature type="chain" id="PRO_0000106729" description="Uncharacterized protein MJ0175">
    <location>
        <begin position="1"/>
        <end position="222"/>
    </location>
</feature>
<gene>
    <name type="ordered locus">MJ0175</name>
</gene>
<name>Y175_METJA</name>
<protein>
    <recommendedName>
        <fullName>Uncharacterized protein MJ0175</fullName>
    </recommendedName>
</protein>
<accession>Q57639</accession>
<keyword id="KW-1185">Reference proteome</keyword>
<dbReference type="EMBL" id="L77117">
    <property type="protein sequence ID" value="AAB98160.1"/>
    <property type="molecule type" value="Genomic_DNA"/>
</dbReference>
<dbReference type="PIR" id="H64321">
    <property type="entry name" value="H64321"/>
</dbReference>
<dbReference type="SMR" id="Q57639"/>
<dbReference type="FunCoup" id="Q57639">
    <property type="interactions" value="121"/>
</dbReference>
<dbReference type="STRING" id="243232.MJ_0175"/>
<dbReference type="PaxDb" id="243232-MJ_0175"/>
<dbReference type="EnsemblBacteria" id="AAB98160">
    <property type="protein sequence ID" value="AAB98160"/>
    <property type="gene ID" value="MJ_0175"/>
</dbReference>
<dbReference type="KEGG" id="mja:MJ_0175"/>
<dbReference type="eggNOG" id="arCOG04318">
    <property type="taxonomic scope" value="Archaea"/>
</dbReference>
<dbReference type="HOGENOM" id="CLU_099315_0_0_2"/>
<dbReference type="InParanoid" id="Q57639"/>
<dbReference type="PhylomeDB" id="Q57639"/>
<dbReference type="Proteomes" id="UP000000805">
    <property type="component" value="Chromosome"/>
</dbReference>
<dbReference type="GO" id="GO:0005737">
    <property type="term" value="C:cytoplasm"/>
    <property type="evidence" value="ECO:0000318"/>
    <property type="project" value="GO_Central"/>
</dbReference>
<dbReference type="GO" id="GO:0003723">
    <property type="term" value="F:RNA binding"/>
    <property type="evidence" value="ECO:0000318"/>
    <property type="project" value="GO_Central"/>
</dbReference>
<dbReference type="GO" id="GO:0043565">
    <property type="term" value="F:sequence-specific DNA binding"/>
    <property type="evidence" value="ECO:0007669"/>
    <property type="project" value="InterPro"/>
</dbReference>
<dbReference type="CDD" id="cd14820">
    <property type="entry name" value="TRAX"/>
    <property type="match status" value="1"/>
</dbReference>
<dbReference type="Gene3D" id="1.20.58.2140">
    <property type="match status" value="1"/>
</dbReference>
<dbReference type="InterPro" id="IPR002848">
    <property type="entry name" value="Translin_fam"/>
</dbReference>
<dbReference type="InterPro" id="IPR036081">
    <property type="entry name" value="Translin_sf"/>
</dbReference>
<dbReference type="NCBIfam" id="NF011159">
    <property type="entry name" value="PRK14562.1-4"/>
    <property type="match status" value="1"/>
</dbReference>
<dbReference type="PANTHER" id="PTHR10741">
    <property type="entry name" value="TRANSLIN AND TRANSLIN ASSOCIATED PROTEIN X"/>
    <property type="match status" value="1"/>
</dbReference>
<dbReference type="Pfam" id="PF01997">
    <property type="entry name" value="Translin"/>
    <property type="match status" value="1"/>
</dbReference>
<dbReference type="SUPFAM" id="SSF74784">
    <property type="entry name" value="Translin"/>
    <property type="match status" value="1"/>
</dbReference>
<sequence length="222" mass="26426">MYKQILTIGYIKFLVVAMDELNYLINYLANKDSVREEILKLSREITRDCAMLIRKIHKSDDKDEFKDKLNEISEKIKKLNSLATFPEFVGYLSTPQQEFVEALSLYMIKFDNKIPSFKELDFIKEENYILGLADVIGELRREVLEAMKNDNLAEVERYFKFMEDLYEFLMNFDYYHVVDNLRRKQDISRGILEKTHGDIVTFIQNLKLREHLKRVQIGLSQE</sequence>